<keyword id="KW-0997">Cell inner membrane</keyword>
<keyword id="KW-1003">Cell membrane</keyword>
<keyword id="KW-0407">Ion channel</keyword>
<keyword id="KW-0406">Ion transport</keyword>
<keyword id="KW-0472">Membrane</keyword>
<keyword id="KW-0479">Metal-binding</keyword>
<keyword id="KW-0630">Potassium</keyword>
<keyword id="KW-0633">Potassium transport</keyword>
<keyword id="KW-1185">Reference proteome</keyword>
<keyword id="KW-0812">Transmembrane</keyword>
<keyword id="KW-1133">Transmembrane helix</keyword>
<keyword id="KW-0813">Transport</keyword>
<proteinExistence type="evidence at protein level"/>
<organism>
    <name type="scientific">Escherichia coli (strain K12)</name>
    <dbReference type="NCBI Taxonomy" id="83333"/>
    <lineage>
        <taxon>Bacteria</taxon>
        <taxon>Pseudomonadati</taxon>
        <taxon>Pseudomonadota</taxon>
        <taxon>Gammaproteobacteria</taxon>
        <taxon>Enterobacterales</taxon>
        <taxon>Enterobacteriaceae</taxon>
        <taxon>Escherichia</taxon>
    </lineage>
</organism>
<gene>
    <name type="primary">trkG</name>
    <name type="ordered locus">b1363</name>
    <name type="ordered locus">JW1358</name>
</gene>
<reference key="1">
    <citation type="journal article" date="1991" name="J. Bacteriol.">
        <title>Subcloning, nucleotide sequence, and expression of trkG, a gene that encodes an integral membrane protein involved in potassium uptake via the Trk system of Escherichia coli.</title>
        <authorList>
            <person name="Schloesser A."/>
            <person name="Kluttig S."/>
            <person name="Hamann A."/>
            <person name="Bakker E.P."/>
        </authorList>
    </citation>
    <scope>NUCLEOTIDE SEQUENCE [GENOMIC DNA]</scope>
    <scope>FUNCTION</scope>
    <scope>SUBCELLULAR LOCATION</scope>
    <source>
        <strain>K12</strain>
    </source>
</reference>
<reference key="2">
    <citation type="journal article" date="1996" name="DNA Res.">
        <title>A 570-kb DNA sequence of the Escherichia coli K-12 genome corresponding to the 28.0-40.1 min region on the linkage map.</title>
        <authorList>
            <person name="Aiba H."/>
            <person name="Baba T."/>
            <person name="Fujita K."/>
            <person name="Hayashi K."/>
            <person name="Inada T."/>
            <person name="Isono K."/>
            <person name="Itoh T."/>
            <person name="Kasai H."/>
            <person name="Kashimoto K."/>
            <person name="Kimura S."/>
            <person name="Kitakawa M."/>
            <person name="Kitagawa M."/>
            <person name="Makino K."/>
            <person name="Miki T."/>
            <person name="Mizobuchi K."/>
            <person name="Mori H."/>
            <person name="Mori T."/>
            <person name="Motomura K."/>
            <person name="Nakade S."/>
            <person name="Nakamura Y."/>
            <person name="Nashimoto H."/>
            <person name="Nishio Y."/>
            <person name="Oshima T."/>
            <person name="Saito N."/>
            <person name="Sampei G."/>
            <person name="Seki Y."/>
            <person name="Sivasundaram S."/>
            <person name="Tagami H."/>
            <person name="Takeda J."/>
            <person name="Takemoto K."/>
            <person name="Takeuchi Y."/>
            <person name="Wada C."/>
            <person name="Yamamoto Y."/>
            <person name="Horiuchi T."/>
        </authorList>
    </citation>
    <scope>NUCLEOTIDE SEQUENCE [LARGE SCALE GENOMIC DNA]</scope>
    <source>
        <strain>K12 / W3110 / ATCC 27325 / DSM 5911</strain>
    </source>
</reference>
<reference key="3">
    <citation type="journal article" date="1997" name="Science">
        <title>The complete genome sequence of Escherichia coli K-12.</title>
        <authorList>
            <person name="Blattner F.R."/>
            <person name="Plunkett G. III"/>
            <person name="Bloch C.A."/>
            <person name="Perna N.T."/>
            <person name="Burland V."/>
            <person name="Riley M."/>
            <person name="Collado-Vides J."/>
            <person name="Glasner J.D."/>
            <person name="Rode C.K."/>
            <person name="Mayhew G.F."/>
            <person name="Gregor J."/>
            <person name="Davis N.W."/>
            <person name="Kirkpatrick H.A."/>
            <person name="Goeden M.A."/>
            <person name="Rose D.J."/>
            <person name="Mau B."/>
            <person name="Shao Y."/>
        </authorList>
    </citation>
    <scope>NUCLEOTIDE SEQUENCE [LARGE SCALE GENOMIC DNA]</scope>
    <source>
        <strain>K12 / MG1655 / ATCC 47076</strain>
    </source>
</reference>
<reference key="4">
    <citation type="journal article" date="2006" name="Mol. Syst. Biol.">
        <title>Highly accurate genome sequences of Escherichia coli K-12 strains MG1655 and W3110.</title>
        <authorList>
            <person name="Hayashi K."/>
            <person name="Morooka N."/>
            <person name="Yamamoto Y."/>
            <person name="Fujita K."/>
            <person name="Isono K."/>
            <person name="Choi S."/>
            <person name="Ohtsubo E."/>
            <person name="Baba T."/>
            <person name="Wanner B.L."/>
            <person name="Mori H."/>
            <person name="Horiuchi T."/>
        </authorList>
    </citation>
    <scope>NUCLEOTIDE SEQUENCE [LARGE SCALE GENOMIC DNA]</scope>
    <source>
        <strain>K12 / W3110 / ATCC 27325 / DSM 5911</strain>
    </source>
</reference>
<reference key="5">
    <citation type="journal article" date="1989" name="J. Biol. Chem.">
        <title>K+-transport protein TrkA of Escherichia coli is a peripheral membrane protein that requires other trk gene products for attachment to the cytoplasmic membrane.</title>
        <authorList>
            <person name="Bossemeyer D."/>
            <person name="Borchard A."/>
            <person name="Dosch D.C."/>
            <person name="Helmer G.C."/>
            <person name="Epstein W."/>
            <person name="Booth I.R."/>
            <person name="Bakker E.P."/>
        </authorList>
    </citation>
    <scope>FUNCTION</scope>
</reference>
<reference key="6">
    <citation type="journal article" date="1995" name="J. Bacteriol.">
        <title>TrkH and its homolog, TrkG, determine the specificity and kinetics of cation transport by the Trk system of Escherichia coli.</title>
        <authorList>
            <person name="Schlosser A."/>
            <person name="Meldorf M."/>
            <person name="Stumpe S."/>
            <person name="Bakker E.P."/>
            <person name="Epstein W."/>
        </authorList>
    </citation>
    <scope>FUNCTION</scope>
    <scope>BIOPHYSICOCHEMICAL PROPERTIES</scope>
</reference>
<reference key="7">
    <citation type="journal article" date="2001" name="Microbiology">
        <title>Identification of the ABC protein SapD as the subunit that confers ATP dependence to the K+-uptake systems Trk(H) and Trk(G) from Escherichia coli K-12.</title>
        <authorList>
            <person name="Harms C."/>
            <person name="Domoto Y."/>
            <person name="Celik C."/>
            <person name="Rahe E."/>
            <person name="Stumpe S."/>
            <person name="Schmid R."/>
            <person name="Nakamura T."/>
            <person name="Bakker E.P."/>
        </authorList>
    </citation>
    <scope>FUNCTION</scope>
    <source>
        <strain>TK1001</strain>
    </source>
</reference>
<reference key="8">
    <citation type="journal article" date="2005" name="Science">
        <title>Global topology analysis of the Escherichia coli inner membrane proteome.</title>
        <authorList>
            <person name="Daley D.O."/>
            <person name="Rapp M."/>
            <person name="Granseth E."/>
            <person name="Melen K."/>
            <person name="Drew D."/>
            <person name="von Heijne G."/>
        </authorList>
    </citation>
    <scope>SUBCELLULAR LOCATION</scope>
    <scope>TOPOLOGY [LARGE SCALE ANALYSIS]</scope>
    <source>
        <strain>K12 / MG1655 / ATCC 47076</strain>
    </source>
</reference>
<name>TRKG_ECOLI</name>
<evidence type="ECO:0000250" key="1"/>
<evidence type="ECO:0000250" key="2">
    <source>
        <dbReference type="UniProtKB" id="Q87TN7"/>
    </source>
</evidence>
<evidence type="ECO:0000269" key="3">
    <source>
    </source>
</evidence>
<evidence type="ECO:0000269" key="4">
    <source>
    </source>
</evidence>
<evidence type="ECO:0000269" key="5">
    <source>
    </source>
</evidence>
<evidence type="ECO:0000269" key="6">
    <source>
    </source>
</evidence>
<evidence type="ECO:0000269" key="7">
    <source>
    </source>
</evidence>
<evidence type="ECO:0000305" key="8"/>
<accession>P23849</accession>
<feature type="chain" id="PRO_0000070474" description="Trk system potassium uptake protein TrkG">
    <location>
        <begin position="1"/>
        <end position="485"/>
    </location>
</feature>
<feature type="topological domain" description="Cytoplasmic" evidence="1">
    <location>
        <begin position="1"/>
        <end position="5"/>
    </location>
</feature>
<feature type="transmembrane region" description="Helical" evidence="1">
    <location>
        <begin position="6"/>
        <end position="32"/>
    </location>
</feature>
<feature type="topological domain" description="Periplasmic" evidence="1">
    <location>
        <begin position="33"/>
        <end position="38"/>
    </location>
</feature>
<feature type="transmembrane region" description="Helical" evidence="1">
    <location>
        <begin position="39"/>
        <end position="60"/>
    </location>
</feature>
<feature type="topological domain" description="Cytoplasmic" evidence="1">
    <location>
        <begin position="61"/>
        <end position="68"/>
    </location>
</feature>
<feature type="transmembrane region" description="Helical" evidence="1">
    <location>
        <begin position="69"/>
        <end position="93"/>
    </location>
</feature>
<feature type="topological domain" description="Periplasmic" evidence="1">
    <location>
        <begin position="94"/>
        <end status="unknown"/>
    </location>
</feature>
<feature type="intramembrane region" evidence="1">
    <location>
        <begin status="unknown"/>
        <end position="100"/>
    </location>
</feature>
<feature type="intramembrane region" description="Helical; Pore-forming" evidence="1">
    <location>
        <begin position="101"/>
        <end position="112"/>
    </location>
</feature>
<feature type="intramembrane region" evidence="1">
    <location>
        <begin position="113"/>
        <end position="118"/>
    </location>
</feature>
<feature type="topological domain" description="Periplasmic" evidence="1">
    <location>
        <begin position="119"/>
        <end position="127"/>
    </location>
</feature>
<feature type="transmembrane region" description="Helical" evidence="1">
    <location>
        <begin position="128"/>
        <end position="153"/>
    </location>
</feature>
<feature type="topological domain" description="Cytoplasmic" evidence="1">
    <location>
        <begin position="154"/>
        <end position="180"/>
    </location>
</feature>
<feature type="transmembrane region" description="Helical" evidence="1">
    <location>
        <begin position="181"/>
        <end position="205"/>
    </location>
</feature>
<feature type="topological domain" description="Periplasmic" evidence="1">
    <location>
        <begin position="206"/>
        <end position="208"/>
    </location>
</feature>
<feature type="intramembrane region" evidence="1">
    <location>
        <position position="209"/>
    </location>
</feature>
<feature type="intramembrane region" description="Helical; Pore-forming" evidence="1">
    <location>
        <begin position="210"/>
        <end position="221"/>
    </location>
</feature>
<feature type="intramembrane region" evidence="1">
    <location>
        <begin position="222"/>
        <end position="227"/>
    </location>
</feature>
<feature type="topological domain" description="Periplasmic" evidence="1">
    <location>
        <begin position="228"/>
        <end position="237"/>
    </location>
</feature>
<feature type="intramembrane region" description="Helical" evidence="1">
    <location>
        <begin position="238"/>
        <end position="253"/>
    </location>
</feature>
<feature type="intramembrane region" evidence="1">
    <location>
        <begin position="254"/>
        <end status="unknown"/>
    </location>
</feature>
<feature type="topological domain" description="Cytoplasmic" evidence="1">
    <location>
        <begin status="unknown"/>
        <end position="276"/>
    </location>
</feature>
<feature type="transmembrane region" description="Helical" evidence="1">
    <location>
        <begin position="277"/>
        <end position="297"/>
    </location>
</feature>
<feature type="topological domain" description="Periplasmic" evidence="1">
    <location>
        <begin position="298"/>
        <end status="unknown"/>
    </location>
</feature>
<feature type="intramembrane region" evidence="1">
    <location>
        <begin status="unknown"/>
        <end position="302"/>
    </location>
</feature>
<feature type="intramembrane region" description="Helical; Pore-forming" evidence="1">
    <location>
        <begin position="303"/>
        <end position="318"/>
    </location>
</feature>
<feature type="intramembrane region" evidence="1">
    <location>
        <begin position="319"/>
        <end position="324"/>
    </location>
</feature>
<feature type="topological domain" description="Periplasmic" evidence="1">
    <location>
        <begin position="325"/>
        <end position="332"/>
    </location>
</feature>
<feature type="intramembrane region" description="Helical" evidence="1">
    <location>
        <begin position="333"/>
        <end position="344"/>
    </location>
</feature>
<feature type="intramembrane region" description="Note=Loop between two helices" evidence="1">
    <location>
        <begin position="345"/>
        <end position="357"/>
    </location>
</feature>
<feature type="intramembrane region" description="Helical" evidence="1">
    <location>
        <begin position="358"/>
        <end status="unknown"/>
    </location>
</feature>
<feature type="topological domain" description="Cytoplasmic" evidence="1">
    <location>
        <begin status="unknown"/>
        <end position="391"/>
    </location>
</feature>
<feature type="transmembrane region" description="Helical" evidence="1">
    <location>
        <begin position="392"/>
        <end position="419"/>
    </location>
</feature>
<feature type="topological domain" description="Periplasmic" evidence="1">
    <location>
        <begin position="420"/>
        <end position="421"/>
    </location>
</feature>
<feature type="intramembrane region" evidence="1">
    <location>
        <begin position="422"/>
        <end position="423"/>
    </location>
</feature>
<feature type="intramembrane region" description="Helical; Pore-forming" evidence="1">
    <location>
        <begin position="424"/>
        <end position="434"/>
    </location>
</feature>
<feature type="intramembrane region" evidence="1">
    <location>
        <begin position="435"/>
        <end position="441"/>
    </location>
</feature>
<feature type="topological domain" description="Periplasmic" evidence="1">
    <location>
        <begin position="442"/>
        <end position="453"/>
    </location>
</feature>
<feature type="intramembrane region" description="Helical" evidence="1">
    <location>
        <begin position="454"/>
        <end position="465"/>
    </location>
</feature>
<feature type="intramembrane region" evidence="1">
    <location>
        <begin position="466"/>
        <end status="unknown"/>
    </location>
</feature>
<feature type="topological domain" description="Cytoplasmic" evidence="1 4">
    <location>
        <begin status="unknown"/>
        <end position="485"/>
    </location>
</feature>
<feature type="region of interest" description="Selectivity filter part 1" evidence="1">
    <location>
        <begin position="113"/>
        <end position="118"/>
    </location>
</feature>
<feature type="region of interest" description="Selectivity filter part 2" evidence="1">
    <location>
        <begin position="222"/>
        <end position="227"/>
    </location>
</feature>
<feature type="region of interest" description="Selectivity filter part 3" evidence="1">
    <location>
        <begin position="319"/>
        <end position="324"/>
    </location>
</feature>
<feature type="region of interest" description="Selectivity filter part 4" evidence="1">
    <location>
        <begin position="436"/>
        <end position="441"/>
    </location>
</feature>
<feature type="binding site" evidence="2">
    <location>
        <position position="114"/>
    </location>
    <ligand>
        <name>K(+)</name>
        <dbReference type="ChEBI" id="CHEBI:29103"/>
    </ligand>
</feature>
<feature type="binding site" evidence="2">
    <location>
        <position position="115"/>
    </location>
    <ligand>
        <name>K(+)</name>
        <dbReference type="ChEBI" id="CHEBI:29103"/>
    </ligand>
</feature>
<feature type="binding site" evidence="2">
    <location>
        <position position="223"/>
    </location>
    <ligand>
        <name>K(+)</name>
        <dbReference type="ChEBI" id="CHEBI:29103"/>
    </ligand>
</feature>
<feature type="binding site" evidence="2">
    <location>
        <position position="224"/>
    </location>
    <ligand>
        <name>K(+)</name>
        <dbReference type="ChEBI" id="CHEBI:29103"/>
    </ligand>
</feature>
<feature type="binding site" evidence="2">
    <location>
        <position position="320"/>
    </location>
    <ligand>
        <name>K(+)</name>
        <dbReference type="ChEBI" id="CHEBI:29103"/>
    </ligand>
</feature>
<feature type="binding site" evidence="2">
    <location>
        <position position="321"/>
    </location>
    <ligand>
        <name>K(+)</name>
        <dbReference type="ChEBI" id="CHEBI:29103"/>
    </ligand>
</feature>
<feature type="binding site" evidence="2">
    <location>
        <position position="437"/>
    </location>
    <ligand>
        <name>K(+)</name>
        <dbReference type="ChEBI" id="CHEBI:29103"/>
    </ligand>
</feature>
<feature type="binding site" evidence="2">
    <location>
        <position position="438"/>
    </location>
    <ligand>
        <name>K(+)</name>
        <dbReference type="ChEBI" id="CHEBI:29103"/>
    </ligand>
</feature>
<comment type="function">
    <text evidence="3 5 6 7">Low-affinity potassium transport system. Interacts with Trk system potassium uptake protein TrkA. Requires TrkE (sapD) for maximal transport activity, low activity is seen in its absence; no further stimulation is seen with SapF (PubMed:11700350). Transport in the absence of SapD is dependent on a high membrane potential and a high cytoplasmic ATP concentration, suggesting this protein may be able to interact with other ATP-binding proteins (PubMed:11700350). Can transport potassium and rubidium (PubMed:7896723).</text>
</comment>
<comment type="biophysicochemical properties">
    <kinetics>
        <KM evidence="7">1 mM for K(+)</KM>
        <KM evidence="7">0.4 mM for Rb(+)</KM>
        <Vmax evidence="7">300.0 umol/min/g enzyme with K(+) as substrate</Vmax>
        <Vmax evidence="7">17.0 umol/min/g enzyme with Rb(+) as substrate</Vmax>
    </kinetics>
</comment>
<comment type="subcellular location">
    <subcellularLocation>
        <location evidence="4 5">Cell inner membrane</location>
        <topology evidence="5">Multi-pass membrane protein</topology>
    </subcellularLocation>
</comment>
<comment type="similarity">
    <text evidence="8">Belongs to the TrkH potassium transport family.</text>
</comment>
<dbReference type="EMBL" id="X56783">
    <property type="protein sequence ID" value="CAA40103.1"/>
    <property type="molecule type" value="Genomic_DNA"/>
</dbReference>
<dbReference type="EMBL" id="U00096">
    <property type="protein sequence ID" value="AAC74445.1"/>
    <property type="molecule type" value="Genomic_DNA"/>
</dbReference>
<dbReference type="EMBL" id="AP009048">
    <property type="protein sequence ID" value="BAA14960.1"/>
    <property type="molecule type" value="Genomic_DNA"/>
</dbReference>
<dbReference type="PIR" id="A39408">
    <property type="entry name" value="A39408"/>
</dbReference>
<dbReference type="RefSeq" id="NP_415881.1">
    <property type="nucleotide sequence ID" value="NC_000913.3"/>
</dbReference>
<dbReference type="RefSeq" id="WP_001097895.1">
    <property type="nucleotide sequence ID" value="NZ_SSUV01000042.1"/>
</dbReference>
<dbReference type="SMR" id="P23849"/>
<dbReference type="BioGRID" id="4260161">
    <property type="interactions" value="11"/>
</dbReference>
<dbReference type="BioGRID" id="850297">
    <property type="interactions" value="1"/>
</dbReference>
<dbReference type="DIP" id="DIP-11029N"/>
<dbReference type="FunCoup" id="P23849">
    <property type="interactions" value="174"/>
</dbReference>
<dbReference type="IntAct" id="P23849">
    <property type="interactions" value="1"/>
</dbReference>
<dbReference type="STRING" id="511145.b1363"/>
<dbReference type="TCDB" id="2.A.38.1.6">
    <property type="family name" value="the k(+) transporter (trk) family"/>
</dbReference>
<dbReference type="jPOST" id="P23849"/>
<dbReference type="PaxDb" id="511145-b1363"/>
<dbReference type="EnsemblBacteria" id="AAC74445">
    <property type="protein sequence ID" value="AAC74445"/>
    <property type="gene ID" value="b1363"/>
</dbReference>
<dbReference type="GeneID" id="86946529"/>
<dbReference type="GeneID" id="945932"/>
<dbReference type="KEGG" id="ecj:JW1358"/>
<dbReference type="KEGG" id="eco:b1363"/>
<dbReference type="KEGG" id="ecoc:C3026_07970"/>
<dbReference type="PATRIC" id="fig|511145.12.peg.1422"/>
<dbReference type="EchoBASE" id="EB1013"/>
<dbReference type="eggNOG" id="COG0168">
    <property type="taxonomic scope" value="Bacteria"/>
</dbReference>
<dbReference type="HOGENOM" id="CLU_030708_0_2_6"/>
<dbReference type="InParanoid" id="P23849"/>
<dbReference type="OMA" id="SSMMTDN"/>
<dbReference type="OrthoDB" id="9810952at2"/>
<dbReference type="PhylomeDB" id="P23849"/>
<dbReference type="BioCyc" id="EcoCyc:TRKG-MONOMER"/>
<dbReference type="BioCyc" id="MetaCyc:TRKG-MONOMER"/>
<dbReference type="PRO" id="PR:P23849"/>
<dbReference type="Proteomes" id="UP000000625">
    <property type="component" value="Chromosome"/>
</dbReference>
<dbReference type="GO" id="GO:0005886">
    <property type="term" value="C:plasma membrane"/>
    <property type="evidence" value="ECO:0000314"/>
    <property type="project" value="EcoCyc"/>
</dbReference>
<dbReference type="GO" id="GO:0005267">
    <property type="term" value="F:potassium channel activity"/>
    <property type="evidence" value="ECO:0000250"/>
    <property type="project" value="UniProtKB"/>
</dbReference>
<dbReference type="GO" id="GO:0030955">
    <property type="term" value="F:potassium ion binding"/>
    <property type="evidence" value="ECO:0000250"/>
    <property type="project" value="UniProtKB"/>
</dbReference>
<dbReference type="GO" id="GO:0015079">
    <property type="term" value="F:potassium ion transmembrane transporter activity"/>
    <property type="evidence" value="ECO:0000315"/>
    <property type="project" value="CACAO"/>
</dbReference>
<dbReference type="GO" id="GO:0015379">
    <property type="term" value="F:potassium:chloride symporter activity"/>
    <property type="evidence" value="ECO:0007669"/>
    <property type="project" value="InterPro"/>
</dbReference>
<dbReference type="GO" id="GO:0071805">
    <property type="term" value="P:potassium ion transmembrane transport"/>
    <property type="evidence" value="ECO:0000315"/>
    <property type="project" value="EcoCyc"/>
</dbReference>
<dbReference type="InterPro" id="IPR003445">
    <property type="entry name" value="Cat_transpt"/>
</dbReference>
<dbReference type="InterPro" id="IPR004772">
    <property type="entry name" value="TrkH"/>
</dbReference>
<dbReference type="NCBIfam" id="TIGR00933">
    <property type="entry name" value="2a38"/>
    <property type="match status" value="1"/>
</dbReference>
<dbReference type="PANTHER" id="PTHR32024">
    <property type="entry name" value="TRK SYSTEM POTASSIUM UPTAKE PROTEIN TRKG-RELATED"/>
    <property type="match status" value="1"/>
</dbReference>
<dbReference type="PANTHER" id="PTHR32024:SF2">
    <property type="entry name" value="TRK SYSTEM POTASSIUM UPTAKE PROTEIN TRKG-RELATED"/>
    <property type="match status" value="1"/>
</dbReference>
<dbReference type="Pfam" id="PF02386">
    <property type="entry name" value="TrkH"/>
    <property type="match status" value="1"/>
</dbReference>
<dbReference type="PIRSF" id="PIRSF006247">
    <property type="entry name" value="TrkH"/>
    <property type="match status" value="1"/>
</dbReference>
<protein>
    <recommendedName>
        <fullName>Trk system potassium uptake protein TrkG</fullName>
    </recommendedName>
</protein>
<sequence>MNTSHVRVVTHMCGFLVWLYSLSMLPPMVVALFYKEKSLFVFFITFVIFFCIGGGAWYTTKKSGIQLRTRDGFIIIVMFWILFSVISAFPLWIDSELNLTFIDALFEGVSGITTTGATVIDDVSSLPRAYLYYRSQLNFIGGLGVIVLAVAVLPLLGIGGAKLYQSEMPGPFKDDKLTPRLADTSRTLWITYSLLGIACIVCYRLAGMPLFDAICHGISTVSLGGFSTHSESIGYFNNYLVELVAGSFSLLSAFNFTLWYIVISRKTIKPLIRDIELRFFLLIALGVIIVTSFQVWHIGMYDLHGSFIHSFFLASSMLTDNGLATQDYASWPTHTIVFLLLSSFFGGCIGSTCGGIKSLRFLILFKQSKHEINQLSHPRALLSVNVGGKIVTDRVMRSVWSFFFLYTLFTVFFILVLNGMGYDFLTSFATVAACINNMGLGFGATASSFGVLNDIAKCLMCIAMILGRLEIYPVIILFSGFFWRS</sequence>